<dbReference type="EC" id="3.4.25.2" evidence="1"/>
<dbReference type="EMBL" id="CP000494">
    <property type="protein sequence ID" value="ABQ32446.1"/>
    <property type="molecule type" value="Genomic_DNA"/>
</dbReference>
<dbReference type="RefSeq" id="WP_011942668.1">
    <property type="nucleotide sequence ID" value="NC_009485.1"/>
</dbReference>
<dbReference type="SMR" id="A5E8F2"/>
<dbReference type="STRING" id="288000.BBta_0149"/>
<dbReference type="MEROPS" id="T01.006"/>
<dbReference type="KEGG" id="bbt:BBta_0149"/>
<dbReference type="eggNOG" id="COG5405">
    <property type="taxonomic scope" value="Bacteria"/>
</dbReference>
<dbReference type="HOGENOM" id="CLU_093872_1_0_5"/>
<dbReference type="OrthoDB" id="9804884at2"/>
<dbReference type="Proteomes" id="UP000000246">
    <property type="component" value="Chromosome"/>
</dbReference>
<dbReference type="GO" id="GO:0009376">
    <property type="term" value="C:HslUV protease complex"/>
    <property type="evidence" value="ECO:0007669"/>
    <property type="project" value="UniProtKB-UniRule"/>
</dbReference>
<dbReference type="GO" id="GO:0005839">
    <property type="term" value="C:proteasome core complex"/>
    <property type="evidence" value="ECO:0007669"/>
    <property type="project" value="InterPro"/>
</dbReference>
<dbReference type="GO" id="GO:0046872">
    <property type="term" value="F:metal ion binding"/>
    <property type="evidence" value="ECO:0007669"/>
    <property type="project" value="UniProtKB-KW"/>
</dbReference>
<dbReference type="GO" id="GO:0004298">
    <property type="term" value="F:threonine-type endopeptidase activity"/>
    <property type="evidence" value="ECO:0007669"/>
    <property type="project" value="UniProtKB-KW"/>
</dbReference>
<dbReference type="GO" id="GO:0051603">
    <property type="term" value="P:proteolysis involved in protein catabolic process"/>
    <property type="evidence" value="ECO:0007669"/>
    <property type="project" value="InterPro"/>
</dbReference>
<dbReference type="CDD" id="cd01913">
    <property type="entry name" value="protease_HslV"/>
    <property type="match status" value="1"/>
</dbReference>
<dbReference type="FunFam" id="3.60.20.10:FF:000002">
    <property type="entry name" value="ATP-dependent protease subunit HslV"/>
    <property type="match status" value="1"/>
</dbReference>
<dbReference type="Gene3D" id="3.60.20.10">
    <property type="entry name" value="Glutamine Phosphoribosylpyrophosphate, subunit 1, domain 1"/>
    <property type="match status" value="1"/>
</dbReference>
<dbReference type="HAMAP" id="MF_00248">
    <property type="entry name" value="HslV"/>
    <property type="match status" value="1"/>
</dbReference>
<dbReference type="InterPro" id="IPR022281">
    <property type="entry name" value="ATP-dep_Prtase_HsIV_su"/>
</dbReference>
<dbReference type="InterPro" id="IPR029055">
    <property type="entry name" value="Ntn_hydrolases_N"/>
</dbReference>
<dbReference type="InterPro" id="IPR001353">
    <property type="entry name" value="Proteasome_sua/b"/>
</dbReference>
<dbReference type="InterPro" id="IPR023333">
    <property type="entry name" value="Proteasome_suB-type"/>
</dbReference>
<dbReference type="NCBIfam" id="TIGR03692">
    <property type="entry name" value="ATP_dep_HslV"/>
    <property type="match status" value="1"/>
</dbReference>
<dbReference type="NCBIfam" id="NF003964">
    <property type="entry name" value="PRK05456.1"/>
    <property type="match status" value="1"/>
</dbReference>
<dbReference type="PANTHER" id="PTHR32194:SF7">
    <property type="entry name" value="ATP-DEPENDENT PROTEASE SUBUNIT HSLV"/>
    <property type="match status" value="1"/>
</dbReference>
<dbReference type="PANTHER" id="PTHR32194">
    <property type="entry name" value="METALLOPROTEASE TLDD"/>
    <property type="match status" value="1"/>
</dbReference>
<dbReference type="Pfam" id="PF00227">
    <property type="entry name" value="Proteasome"/>
    <property type="match status" value="1"/>
</dbReference>
<dbReference type="PIRSF" id="PIRSF039093">
    <property type="entry name" value="HslV"/>
    <property type="match status" value="1"/>
</dbReference>
<dbReference type="SUPFAM" id="SSF56235">
    <property type="entry name" value="N-terminal nucleophile aminohydrolases (Ntn hydrolases)"/>
    <property type="match status" value="1"/>
</dbReference>
<dbReference type="PROSITE" id="PS51476">
    <property type="entry name" value="PROTEASOME_BETA_2"/>
    <property type="match status" value="1"/>
</dbReference>
<organism>
    <name type="scientific">Bradyrhizobium sp. (strain BTAi1 / ATCC BAA-1182)</name>
    <dbReference type="NCBI Taxonomy" id="288000"/>
    <lineage>
        <taxon>Bacteria</taxon>
        <taxon>Pseudomonadati</taxon>
        <taxon>Pseudomonadota</taxon>
        <taxon>Alphaproteobacteria</taxon>
        <taxon>Hyphomicrobiales</taxon>
        <taxon>Nitrobacteraceae</taxon>
        <taxon>Bradyrhizobium</taxon>
    </lineage>
</organism>
<name>HSLV_BRASB</name>
<reference key="1">
    <citation type="journal article" date="2007" name="Science">
        <title>Legumes symbioses: absence of nod genes in photosynthetic bradyrhizobia.</title>
        <authorList>
            <person name="Giraud E."/>
            <person name="Moulin L."/>
            <person name="Vallenet D."/>
            <person name="Barbe V."/>
            <person name="Cytryn E."/>
            <person name="Avarre J.-C."/>
            <person name="Jaubert M."/>
            <person name="Simon D."/>
            <person name="Cartieaux F."/>
            <person name="Prin Y."/>
            <person name="Bena G."/>
            <person name="Hannibal L."/>
            <person name="Fardoux J."/>
            <person name="Kojadinovic M."/>
            <person name="Vuillet L."/>
            <person name="Lajus A."/>
            <person name="Cruveiller S."/>
            <person name="Rouy Z."/>
            <person name="Mangenot S."/>
            <person name="Segurens B."/>
            <person name="Dossat C."/>
            <person name="Franck W.L."/>
            <person name="Chang W.-S."/>
            <person name="Saunders E."/>
            <person name="Bruce D."/>
            <person name="Richardson P."/>
            <person name="Normand P."/>
            <person name="Dreyfus B."/>
            <person name="Pignol D."/>
            <person name="Stacey G."/>
            <person name="Emerich D."/>
            <person name="Vermeglio A."/>
            <person name="Medigue C."/>
            <person name="Sadowsky M."/>
        </authorList>
    </citation>
    <scope>NUCLEOTIDE SEQUENCE [LARGE SCALE GENOMIC DNA]</scope>
    <source>
        <strain>BTAi1 / ATCC BAA-1182</strain>
    </source>
</reference>
<proteinExistence type="inferred from homology"/>
<feature type="chain" id="PRO_1000012583" description="ATP-dependent protease subunit HslV">
    <location>
        <begin position="1"/>
        <end position="186"/>
    </location>
</feature>
<feature type="active site" evidence="1">
    <location>
        <position position="14"/>
    </location>
</feature>
<feature type="binding site" evidence="1">
    <location>
        <position position="168"/>
    </location>
    <ligand>
        <name>Na(+)</name>
        <dbReference type="ChEBI" id="CHEBI:29101"/>
    </ligand>
</feature>
<feature type="binding site" evidence="1">
    <location>
        <position position="171"/>
    </location>
    <ligand>
        <name>Na(+)</name>
        <dbReference type="ChEBI" id="CHEBI:29101"/>
    </ligand>
</feature>
<feature type="binding site" evidence="1">
    <location>
        <position position="174"/>
    </location>
    <ligand>
        <name>Na(+)</name>
        <dbReference type="ChEBI" id="CHEBI:29101"/>
    </ligand>
</feature>
<evidence type="ECO:0000255" key="1">
    <source>
        <dbReference type="HAMAP-Rule" id="MF_00248"/>
    </source>
</evidence>
<sequence length="186" mass="19896">MHATSHEPAVWHGTTILTVRKGGRVVIGGDGQVSIGQTVIKSNARKVRKLGKGDVIGGFAGATADAFTLFERLESKLEQYPGQLTRAAVELAKDWRTDRYLRRLEAMMIVADKEVSLVLTGTGDVLEPEAGVMAIGSGGNYALAAARALIDTDKDAESIVRRSLDIAADICVYTNRNITIEALAAE</sequence>
<keyword id="KW-0021">Allosteric enzyme</keyword>
<keyword id="KW-0963">Cytoplasm</keyword>
<keyword id="KW-0378">Hydrolase</keyword>
<keyword id="KW-0479">Metal-binding</keyword>
<keyword id="KW-0645">Protease</keyword>
<keyword id="KW-1185">Reference proteome</keyword>
<keyword id="KW-0915">Sodium</keyword>
<keyword id="KW-0888">Threonine protease</keyword>
<accession>A5E8F2</accession>
<comment type="function">
    <text evidence="1">Protease subunit of a proteasome-like degradation complex believed to be a general protein degrading machinery.</text>
</comment>
<comment type="catalytic activity">
    <reaction evidence="1">
        <text>ATP-dependent cleavage of peptide bonds with broad specificity.</text>
        <dbReference type="EC" id="3.4.25.2"/>
    </reaction>
</comment>
<comment type="activity regulation">
    <text evidence="1">Allosterically activated by HslU binding.</text>
</comment>
<comment type="subunit">
    <text evidence="1">A double ring-shaped homohexamer of HslV is capped on each side by a ring-shaped HslU homohexamer. The assembly of the HslU/HslV complex is dependent on binding of ATP.</text>
</comment>
<comment type="subcellular location">
    <subcellularLocation>
        <location evidence="1">Cytoplasm</location>
    </subcellularLocation>
</comment>
<comment type="similarity">
    <text evidence="1">Belongs to the peptidase T1B family. HslV subfamily.</text>
</comment>
<protein>
    <recommendedName>
        <fullName evidence="1">ATP-dependent protease subunit HslV</fullName>
        <ecNumber evidence="1">3.4.25.2</ecNumber>
    </recommendedName>
</protein>
<gene>
    <name evidence="1" type="primary">hslV</name>
    <name type="ordered locus">BBta_0149</name>
</gene>